<comment type="function">
    <text evidence="1">Catalyzes the deamination of dCTP to dUTP.</text>
</comment>
<comment type="catalytic activity">
    <reaction evidence="1">
        <text>dCTP + H2O + H(+) = dUTP + NH4(+)</text>
        <dbReference type="Rhea" id="RHEA:22680"/>
        <dbReference type="ChEBI" id="CHEBI:15377"/>
        <dbReference type="ChEBI" id="CHEBI:15378"/>
        <dbReference type="ChEBI" id="CHEBI:28938"/>
        <dbReference type="ChEBI" id="CHEBI:61481"/>
        <dbReference type="ChEBI" id="CHEBI:61555"/>
        <dbReference type="EC" id="3.5.4.13"/>
    </reaction>
</comment>
<comment type="pathway">
    <text evidence="1">Pyrimidine metabolism; dUMP biosynthesis; dUMP from dCTP (dUTP route): step 1/2.</text>
</comment>
<comment type="subunit">
    <text evidence="1">Homotrimer.</text>
</comment>
<comment type="similarity">
    <text evidence="1">Belongs to the dCTP deaminase family.</text>
</comment>
<comment type="sequence caution" evidence="2">
    <conflict type="erroneous initiation">
        <sequence resource="EMBL-CDS" id="BAB12827"/>
    </conflict>
</comment>
<sequence length="193" mass="21952">MRLCDKDIEEWLERKELIIEPYPNKTLINGITVDIHLGNKFRFFYEHTGSCIDLSNSKIIGGLSLTEIMSNEIIFSKEQPCFLQPGSLVLCSTFESIKMPNNLVGWLDGRSSLARLGLMIHATAHRIDPGWNGNIVLEMFNAGKLTLVLRPKMRIAALSFEVLSQPVLRPYNLRKEAKYKIQNGVVPSRIHKE</sequence>
<keyword id="KW-0378">Hydrolase</keyword>
<keyword id="KW-0546">Nucleotide metabolism</keyword>
<keyword id="KW-0547">Nucleotide-binding</keyword>
<keyword id="KW-1185">Reference proteome</keyword>
<accession>P57209</accession>
<proteinExistence type="inferred from homology"/>
<protein>
    <recommendedName>
        <fullName evidence="1">dCTP deaminase</fullName>
        <ecNumber evidence="1">3.5.4.13</ecNumber>
    </recommendedName>
    <alternativeName>
        <fullName evidence="1">Deoxycytidine triphosphate deaminase</fullName>
    </alternativeName>
</protein>
<gene>
    <name evidence="1" type="primary">dcd</name>
    <name type="ordered locus">BU108</name>
</gene>
<name>DCD_BUCAI</name>
<evidence type="ECO:0000255" key="1">
    <source>
        <dbReference type="HAMAP-Rule" id="MF_00146"/>
    </source>
</evidence>
<evidence type="ECO:0000305" key="2"/>
<organism>
    <name type="scientific">Buchnera aphidicola subsp. Acyrthosiphon pisum (strain APS)</name>
    <name type="common">Acyrthosiphon pisum symbiotic bacterium</name>
    <dbReference type="NCBI Taxonomy" id="107806"/>
    <lineage>
        <taxon>Bacteria</taxon>
        <taxon>Pseudomonadati</taxon>
        <taxon>Pseudomonadota</taxon>
        <taxon>Gammaproteobacteria</taxon>
        <taxon>Enterobacterales</taxon>
        <taxon>Erwiniaceae</taxon>
        <taxon>Buchnera</taxon>
    </lineage>
</organism>
<dbReference type="EC" id="3.5.4.13" evidence="1"/>
<dbReference type="EMBL" id="BA000003">
    <property type="protein sequence ID" value="BAB12827.1"/>
    <property type="status" value="ALT_INIT"/>
    <property type="molecule type" value="Genomic_DNA"/>
</dbReference>
<dbReference type="RefSeq" id="NP_239941.2">
    <property type="nucleotide sequence ID" value="NC_002528.1"/>
</dbReference>
<dbReference type="RefSeq" id="WP_010895949.1">
    <property type="nucleotide sequence ID" value="NC_002528.1"/>
</dbReference>
<dbReference type="SMR" id="P57209"/>
<dbReference type="STRING" id="563178.BUAP5A_106"/>
<dbReference type="EnsemblBacteria" id="BAB12827">
    <property type="protein sequence ID" value="BAB12827"/>
    <property type="gene ID" value="BAB12827"/>
</dbReference>
<dbReference type="KEGG" id="buc:BU108"/>
<dbReference type="PATRIC" id="fig|107806.10.peg.116"/>
<dbReference type="eggNOG" id="COG0717">
    <property type="taxonomic scope" value="Bacteria"/>
</dbReference>
<dbReference type="HOGENOM" id="CLU_087476_2_0_6"/>
<dbReference type="UniPathway" id="UPA00610">
    <property type="reaction ID" value="UER00665"/>
</dbReference>
<dbReference type="Proteomes" id="UP000001806">
    <property type="component" value="Chromosome"/>
</dbReference>
<dbReference type="GO" id="GO:0008829">
    <property type="term" value="F:dCTP deaminase activity"/>
    <property type="evidence" value="ECO:0007669"/>
    <property type="project" value="UniProtKB-UniRule"/>
</dbReference>
<dbReference type="GO" id="GO:0000166">
    <property type="term" value="F:nucleotide binding"/>
    <property type="evidence" value="ECO:0007669"/>
    <property type="project" value="UniProtKB-KW"/>
</dbReference>
<dbReference type="GO" id="GO:0006226">
    <property type="term" value="P:dUMP biosynthetic process"/>
    <property type="evidence" value="ECO:0007669"/>
    <property type="project" value="UniProtKB-UniPathway"/>
</dbReference>
<dbReference type="GO" id="GO:0006229">
    <property type="term" value="P:dUTP biosynthetic process"/>
    <property type="evidence" value="ECO:0007669"/>
    <property type="project" value="UniProtKB-UniRule"/>
</dbReference>
<dbReference type="GO" id="GO:0015949">
    <property type="term" value="P:nucleobase-containing small molecule interconversion"/>
    <property type="evidence" value="ECO:0007669"/>
    <property type="project" value="TreeGrafter"/>
</dbReference>
<dbReference type="CDD" id="cd07557">
    <property type="entry name" value="trimeric_dUTPase"/>
    <property type="match status" value="1"/>
</dbReference>
<dbReference type="Gene3D" id="2.70.40.10">
    <property type="match status" value="1"/>
</dbReference>
<dbReference type="HAMAP" id="MF_00146">
    <property type="entry name" value="dCTP_deaminase"/>
    <property type="match status" value="1"/>
</dbReference>
<dbReference type="InterPro" id="IPR011962">
    <property type="entry name" value="dCTP_deaminase"/>
</dbReference>
<dbReference type="InterPro" id="IPR036157">
    <property type="entry name" value="dUTPase-like_sf"/>
</dbReference>
<dbReference type="InterPro" id="IPR033704">
    <property type="entry name" value="dUTPase_trimeric"/>
</dbReference>
<dbReference type="NCBIfam" id="TIGR02274">
    <property type="entry name" value="dCTP_deam"/>
    <property type="match status" value="1"/>
</dbReference>
<dbReference type="PANTHER" id="PTHR42680">
    <property type="entry name" value="DCTP DEAMINASE"/>
    <property type="match status" value="1"/>
</dbReference>
<dbReference type="PANTHER" id="PTHR42680:SF3">
    <property type="entry name" value="DCTP DEAMINASE"/>
    <property type="match status" value="1"/>
</dbReference>
<dbReference type="Pfam" id="PF22769">
    <property type="entry name" value="DCD"/>
    <property type="match status" value="1"/>
</dbReference>
<dbReference type="SUPFAM" id="SSF51283">
    <property type="entry name" value="dUTPase-like"/>
    <property type="match status" value="1"/>
</dbReference>
<feature type="chain" id="PRO_0000155969" description="dCTP deaminase">
    <location>
        <begin position="1"/>
        <end position="193"/>
    </location>
</feature>
<feature type="active site" description="Proton donor/acceptor" evidence="1">
    <location>
        <position position="138"/>
    </location>
</feature>
<feature type="binding site" evidence="1">
    <location>
        <begin position="110"/>
        <end position="115"/>
    </location>
    <ligand>
        <name>dCTP</name>
        <dbReference type="ChEBI" id="CHEBI:61481"/>
    </ligand>
</feature>
<feature type="binding site" evidence="1">
    <location>
        <position position="128"/>
    </location>
    <ligand>
        <name>dCTP</name>
        <dbReference type="ChEBI" id="CHEBI:61481"/>
    </ligand>
</feature>
<feature type="binding site" evidence="1">
    <location>
        <begin position="136"/>
        <end position="138"/>
    </location>
    <ligand>
        <name>dCTP</name>
        <dbReference type="ChEBI" id="CHEBI:61481"/>
    </ligand>
</feature>
<feature type="binding site" evidence="1">
    <location>
        <position position="171"/>
    </location>
    <ligand>
        <name>dCTP</name>
        <dbReference type="ChEBI" id="CHEBI:61481"/>
    </ligand>
</feature>
<feature type="binding site" evidence="1">
    <location>
        <position position="178"/>
    </location>
    <ligand>
        <name>dCTP</name>
        <dbReference type="ChEBI" id="CHEBI:61481"/>
    </ligand>
</feature>
<feature type="binding site" evidence="1">
    <location>
        <position position="182"/>
    </location>
    <ligand>
        <name>dCTP</name>
        <dbReference type="ChEBI" id="CHEBI:61481"/>
    </ligand>
</feature>
<reference key="1">
    <citation type="journal article" date="2000" name="Nature">
        <title>Genome sequence of the endocellular bacterial symbiont of aphids Buchnera sp. APS.</title>
        <authorList>
            <person name="Shigenobu S."/>
            <person name="Watanabe H."/>
            <person name="Hattori M."/>
            <person name="Sakaki Y."/>
            <person name="Ishikawa H."/>
        </authorList>
    </citation>
    <scope>NUCLEOTIDE SEQUENCE [LARGE SCALE GENOMIC DNA]</scope>
    <source>
        <strain>APS</strain>
    </source>
</reference>